<feature type="chain" id="PRO_0000329166" description="DNA-directed RNA polymerase subunit beta">
    <location>
        <begin position="1"/>
        <end position="1193"/>
    </location>
</feature>
<feature type="region of interest" description="Disordered" evidence="2">
    <location>
        <begin position="1152"/>
        <end position="1193"/>
    </location>
</feature>
<feature type="compositionally biased region" description="Acidic residues" evidence="2">
    <location>
        <begin position="1152"/>
        <end position="1161"/>
    </location>
</feature>
<feature type="compositionally biased region" description="Basic and acidic residues" evidence="2">
    <location>
        <begin position="1184"/>
        <end position="1193"/>
    </location>
</feature>
<reference key="1">
    <citation type="journal article" date="2007" name="PLoS ONE">
        <title>Paradoxical DNA repair and peroxide resistance gene conservation in Bacillus pumilus SAFR-032.</title>
        <authorList>
            <person name="Gioia J."/>
            <person name="Yerrapragada S."/>
            <person name="Qin X."/>
            <person name="Jiang H."/>
            <person name="Igboeli O.C."/>
            <person name="Muzny D."/>
            <person name="Dugan-Rocha S."/>
            <person name="Ding Y."/>
            <person name="Hawes A."/>
            <person name="Liu W."/>
            <person name="Perez L."/>
            <person name="Kovar C."/>
            <person name="Dinh H."/>
            <person name="Lee S."/>
            <person name="Nazareth L."/>
            <person name="Blyth P."/>
            <person name="Holder M."/>
            <person name="Buhay C."/>
            <person name="Tirumalai M.R."/>
            <person name="Liu Y."/>
            <person name="Dasgupta I."/>
            <person name="Bokhetache L."/>
            <person name="Fujita M."/>
            <person name="Karouia F."/>
            <person name="Eswara Moorthy P."/>
            <person name="Siefert J."/>
            <person name="Uzman A."/>
            <person name="Buzumbo P."/>
            <person name="Verma A."/>
            <person name="Zwiya H."/>
            <person name="McWilliams B.D."/>
            <person name="Olowu A."/>
            <person name="Clinkenbeard K.D."/>
            <person name="Newcombe D."/>
            <person name="Golebiewski L."/>
            <person name="Petrosino J.F."/>
            <person name="Nicholson W.L."/>
            <person name="Fox G.E."/>
            <person name="Venkateswaran K."/>
            <person name="Highlander S.K."/>
            <person name="Weinstock G.M."/>
        </authorList>
    </citation>
    <scope>NUCLEOTIDE SEQUENCE [LARGE SCALE GENOMIC DNA]</scope>
    <source>
        <strain>SAFR-032</strain>
    </source>
</reference>
<reference key="2">
    <citation type="journal article" date="2016" name="PLoS ONE">
        <title>Bacillus pumilus SAFR-032 Genome Revisited: Sequence Update and Re-Annotation.</title>
        <authorList>
            <person name="Stepanov V.G."/>
            <person name="Tirumalai M.R."/>
            <person name="Montazari S."/>
            <person name="Checinska A."/>
            <person name="Venkateswaran K."/>
            <person name="Fox G.E."/>
        </authorList>
    </citation>
    <scope>SEQUENCE REVISION TO N-TERMINUS</scope>
    <source>
        <strain>SAFR-032</strain>
    </source>
</reference>
<comment type="function">
    <text evidence="1">DNA-dependent RNA polymerase catalyzes the transcription of DNA into RNA using the four ribonucleoside triphosphates as substrates.</text>
</comment>
<comment type="catalytic activity">
    <reaction evidence="1">
        <text>RNA(n) + a ribonucleoside 5'-triphosphate = RNA(n+1) + diphosphate</text>
        <dbReference type="Rhea" id="RHEA:21248"/>
        <dbReference type="Rhea" id="RHEA-COMP:14527"/>
        <dbReference type="Rhea" id="RHEA-COMP:17342"/>
        <dbReference type="ChEBI" id="CHEBI:33019"/>
        <dbReference type="ChEBI" id="CHEBI:61557"/>
        <dbReference type="ChEBI" id="CHEBI:140395"/>
        <dbReference type="EC" id="2.7.7.6"/>
    </reaction>
</comment>
<comment type="subunit">
    <text evidence="1">The RNAP catalytic core consists of 2 alpha, 1 beta, 1 beta' and 1 omega subunit. When a sigma factor is associated with the core the holoenzyme is formed, which can initiate transcription.</text>
</comment>
<comment type="similarity">
    <text evidence="1">Belongs to the RNA polymerase beta chain family.</text>
</comment>
<organism>
    <name type="scientific">Bacillus pumilus (strain SAFR-032)</name>
    <dbReference type="NCBI Taxonomy" id="315750"/>
    <lineage>
        <taxon>Bacteria</taxon>
        <taxon>Bacillati</taxon>
        <taxon>Bacillota</taxon>
        <taxon>Bacilli</taxon>
        <taxon>Bacillales</taxon>
        <taxon>Bacillaceae</taxon>
        <taxon>Bacillus</taxon>
    </lineage>
</organism>
<proteinExistence type="inferred from homology"/>
<keyword id="KW-0240">DNA-directed RNA polymerase</keyword>
<keyword id="KW-0548">Nucleotidyltransferase</keyword>
<keyword id="KW-0804">Transcription</keyword>
<keyword id="KW-0808">Transferase</keyword>
<evidence type="ECO:0000255" key="1">
    <source>
        <dbReference type="HAMAP-Rule" id="MF_01321"/>
    </source>
</evidence>
<evidence type="ECO:0000256" key="2">
    <source>
        <dbReference type="SAM" id="MobiDB-lite"/>
    </source>
</evidence>
<dbReference type="EC" id="2.7.7.6" evidence="1"/>
<dbReference type="EMBL" id="CP000813">
    <property type="protein sequence ID" value="ABV60793.2"/>
    <property type="molecule type" value="Genomic_DNA"/>
</dbReference>
<dbReference type="RefSeq" id="WP_041815109.1">
    <property type="nucleotide sequence ID" value="NZ_VEIS01000020.1"/>
</dbReference>
<dbReference type="SMR" id="A8F976"/>
<dbReference type="STRING" id="315750.BPUM_0093"/>
<dbReference type="GeneID" id="5619335"/>
<dbReference type="KEGG" id="bpu:BPUM_0093"/>
<dbReference type="eggNOG" id="COG0085">
    <property type="taxonomic scope" value="Bacteria"/>
</dbReference>
<dbReference type="HOGENOM" id="CLU_000524_4_1_9"/>
<dbReference type="OrthoDB" id="9803954at2"/>
<dbReference type="Proteomes" id="UP000001355">
    <property type="component" value="Chromosome"/>
</dbReference>
<dbReference type="GO" id="GO:0000428">
    <property type="term" value="C:DNA-directed RNA polymerase complex"/>
    <property type="evidence" value="ECO:0007669"/>
    <property type="project" value="UniProtKB-KW"/>
</dbReference>
<dbReference type="GO" id="GO:0003677">
    <property type="term" value="F:DNA binding"/>
    <property type="evidence" value="ECO:0007669"/>
    <property type="project" value="UniProtKB-UniRule"/>
</dbReference>
<dbReference type="GO" id="GO:0003899">
    <property type="term" value="F:DNA-directed RNA polymerase activity"/>
    <property type="evidence" value="ECO:0007669"/>
    <property type="project" value="UniProtKB-UniRule"/>
</dbReference>
<dbReference type="GO" id="GO:0032549">
    <property type="term" value="F:ribonucleoside binding"/>
    <property type="evidence" value="ECO:0007669"/>
    <property type="project" value="InterPro"/>
</dbReference>
<dbReference type="GO" id="GO:0006351">
    <property type="term" value="P:DNA-templated transcription"/>
    <property type="evidence" value="ECO:0007669"/>
    <property type="project" value="UniProtKB-UniRule"/>
</dbReference>
<dbReference type="CDD" id="cd00653">
    <property type="entry name" value="RNA_pol_B_RPB2"/>
    <property type="match status" value="1"/>
</dbReference>
<dbReference type="FunFam" id="3.90.1800.10:FF:000001">
    <property type="entry name" value="DNA-directed RNA polymerase subunit beta"/>
    <property type="match status" value="1"/>
</dbReference>
<dbReference type="Gene3D" id="2.40.50.100">
    <property type="match status" value="1"/>
</dbReference>
<dbReference type="Gene3D" id="2.40.50.150">
    <property type="match status" value="1"/>
</dbReference>
<dbReference type="Gene3D" id="3.90.1100.10">
    <property type="match status" value="3"/>
</dbReference>
<dbReference type="Gene3D" id="2.40.270.10">
    <property type="entry name" value="DNA-directed RNA polymerase, subunit 2, domain 6"/>
    <property type="match status" value="1"/>
</dbReference>
<dbReference type="Gene3D" id="3.90.1800.10">
    <property type="entry name" value="RNA polymerase alpha subunit dimerisation domain"/>
    <property type="match status" value="1"/>
</dbReference>
<dbReference type="Gene3D" id="3.90.1110.10">
    <property type="entry name" value="RNA polymerase Rpb2, domain 2"/>
    <property type="match status" value="1"/>
</dbReference>
<dbReference type="HAMAP" id="MF_01321">
    <property type="entry name" value="RNApol_bact_RpoB"/>
    <property type="match status" value="1"/>
</dbReference>
<dbReference type="InterPro" id="IPR019462">
    <property type="entry name" value="DNA-dir_RNA_pol_bsu_external_1"/>
</dbReference>
<dbReference type="InterPro" id="IPR015712">
    <property type="entry name" value="DNA-dir_RNA_pol_su2"/>
</dbReference>
<dbReference type="InterPro" id="IPR007120">
    <property type="entry name" value="DNA-dir_RNAP_su2_dom"/>
</dbReference>
<dbReference type="InterPro" id="IPR037033">
    <property type="entry name" value="DNA-dir_RNAP_su2_hyb_sf"/>
</dbReference>
<dbReference type="InterPro" id="IPR010243">
    <property type="entry name" value="RNA_pol_bsu_bac"/>
</dbReference>
<dbReference type="InterPro" id="IPR007121">
    <property type="entry name" value="RNA_pol_bsu_CS"/>
</dbReference>
<dbReference type="InterPro" id="IPR007644">
    <property type="entry name" value="RNA_pol_bsu_protrusion"/>
</dbReference>
<dbReference type="InterPro" id="IPR007642">
    <property type="entry name" value="RNA_pol_Rpb2_2"/>
</dbReference>
<dbReference type="InterPro" id="IPR037034">
    <property type="entry name" value="RNA_pol_Rpb2_2_sf"/>
</dbReference>
<dbReference type="InterPro" id="IPR007645">
    <property type="entry name" value="RNA_pol_Rpb2_3"/>
</dbReference>
<dbReference type="InterPro" id="IPR007641">
    <property type="entry name" value="RNA_pol_Rpb2_7"/>
</dbReference>
<dbReference type="InterPro" id="IPR014724">
    <property type="entry name" value="RNA_pol_RPB2_OB-fold"/>
</dbReference>
<dbReference type="NCBIfam" id="NF001616">
    <property type="entry name" value="PRK00405.1"/>
    <property type="match status" value="1"/>
</dbReference>
<dbReference type="NCBIfam" id="TIGR02013">
    <property type="entry name" value="rpoB"/>
    <property type="match status" value="1"/>
</dbReference>
<dbReference type="PANTHER" id="PTHR20856">
    <property type="entry name" value="DNA-DIRECTED RNA POLYMERASE I SUBUNIT 2"/>
    <property type="match status" value="1"/>
</dbReference>
<dbReference type="Pfam" id="PF04563">
    <property type="entry name" value="RNA_pol_Rpb2_1"/>
    <property type="match status" value="1"/>
</dbReference>
<dbReference type="Pfam" id="PF04561">
    <property type="entry name" value="RNA_pol_Rpb2_2"/>
    <property type="match status" value="2"/>
</dbReference>
<dbReference type="Pfam" id="PF04565">
    <property type="entry name" value="RNA_pol_Rpb2_3"/>
    <property type="match status" value="1"/>
</dbReference>
<dbReference type="Pfam" id="PF10385">
    <property type="entry name" value="RNA_pol_Rpb2_45"/>
    <property type="match status" value="1"/>
</dbReference>
<dbReference type="Pfam" id="PF00562">
    <property type="entry name" value="RNA_pol_Rpb2_6"/>
    <property type="match status" value="1"/>
</dbReference>
<dbReference type="Pfam" id="PF04560">
    <property type="entry name" value="RNA_pol_Rpb2_7"/>
    <property type="match status" value="1"/>
</dbReference>
<dbReference type="SUPFAM" id="SSF64484">
    <property type="entry name" value="beta and beta-prime subunits of DNA dependent RNA-polymerase"/>
    <property type="match status" value="1"/>
</dbReference>
<dbReference type="PROSITE" id="PS01166">
    <property type="entry name" value="RNA_POL_BETA"/>
    <property type="match status" value="1"/>
</dbReference>
<protein>
    <recommendedName>
        <fullName evidence="1">DNA-directed RNA polymerase subunit beta</fullName>
        <shortName evidence="1">RNAP subunit beta</shortName>
        <ecNumber evidence="1">2.7.7.6</ecNumber>
    </recommendedName>
    <alternativeName>
        <fullName evidence="1">RNA polymerase subunit beta</fullName>
    </alternativeName>
    <alternativeName>
        <fullName evidence="1">Transcriptase subunit beta</fullName>
    </alternativeName>
</protein>
<sequence length="1193" mass="133608">MTGQLVQYGRHRQRRSYARISEVLELPNLIEIQTSSYQWFLDEGLREMFQDISPIEDFTGNLSLEFIDYSLGDPKYPVAESKERDVTYSAPLRVKVRLINKETGEVKDQDVFMGDFPIMTDTGTFIINGAERVIVSQLVRSPSVYFSGKVDKNGKKGFTATVIPNRGAWLEYETDAKDVVYVRIDRTRKLPVTVLLRALGFSSDQEILDLIGENEYLRNTLEKDNTENADKALLEIYERLRPGEPPTVENAKSLLDSRFFDPKRYDLANVGRYKINKKLHIKNRLFNQKLAETLVDPETGEILAEKGQILDRRVLDKVLPYLENGIGFRKLYPNGGVVEDEVELQSIKIYAPSDQEGEQVINVIGNAYVEEAVKNITPSDIIASISYFFNLLHGVGDTDDIDHLGNRRLRSVGELLQNQFRIGLSRMERVVRERMSIQDTNTITPQQLINIRPVIASIKEFFGSSQLSQFMDQTNPLAELTHKRRLSALGPGGLTRERAGMEVRDVHYSHYGRMCPIETPEGPNIGLINSLSSFAKVNRFGFIETPYRRVDPETGKVTPRIDYLTADEEDNYVVAQANALLADDGSFIDDNIIARFRGENTVVPRNRVDYMDVSPKQVVSAATACIPFLENDDSNRALMGANMQRQAVPLMQPESPIVGTGMEYVSGKDSGAAVICRYPGVVERVEAKNIWVRRYEDVDGQQVKGNLDKYSLLKFVRSNQGTCYNQRPIVSVGDEVVKGEILADGPSMEKGELALGRNVMVGFMTWDGYNYEDAIIMSERLVKDDVYTSIHIEEYESEARDTKLGPEEITRDIPNVGEDALRNLDERGIIRIGAEVKDGDLLVGKVTPKGVTELTAEERLLHAIFGEKAREVRDTSLRVPHGGGGIIHDVKVFNREDGDELPPGVNQLVRVYIVQKRKISEGDKMAGRHGNKGVISKILPEEDMPYLPDGTPIDIMLNPLGVPSRMNIGQVLELHMGMAARYLGIHIASPVFDGAREEDVWETLEEAGMSRDAKTVLYDGRTGEPFDNRVSVGIMYMIKLAHMVDDKLHARSTGPYSLVTQQPLGGKAQFGGQRFGEMEVWALEAYGAAYTLQEILTVKSDDVVGRVKTYEAIVKGDNVPEPGVPESFKVLIKELQSLGMDVKILSGDEEEIEMRDLEDDEETKKADGLALSNDEDAADLAPVDLERDAVTKE</sequence>
<name>RPOB_BACP2</name>
<accession>A8F976</accession>
<gene>
    <name evidence="1" type="primary">rpoB</name>
    <name type="ordered locus">BPUM_0093</name>
</gene>